<comment type="catalytic activity">
    <reaction evidence="1">
        <text>(6R)-10-formyltetrahydrofolate + 5-amino-1-(5-phospho-beta-D-ribosyl)imidazole-4-carboxamide = 5-formamido-1-(5-phospho-D-ribosyl)imidazole-4-carboxamide + (6S)-5,6,7,8-tetrahydrofolate</text>
        <dbReference type="Rhea" id="RHEA:22192"/>
        <dbReference type="ChEBI" id="CHEBI:57453"/>
        <dbReference type="ChEBI" id="CHEBI:58467"/>
        <dbReference type="ChEBI" id="CHEBI:58475"/>
        <dbReference type="ChEBI" id="CHEBI:195366"/>
        <dbReference type="EC" id="2.1.2.3"/>
    </reaction>
</comment>
<comment type="catalytic activity">
    <reaction evidence="1">
        <text>IMP + H2O = 5-formamido-1-(5-phospho-D-ribosyl)imidazole-4-carboxamide</text>
        <dbReference type="Rhea" id="RHEA:18445"/>
        <dbReference type="ChEBI" id="CHEBI:15377"/>
        <dbReference type="ChEBI" id="CHEBI:58053"/>
        <dbReference type="ChEBI" id="CHEBI:58467"/>
        <dbReference type="EC" id="3.5.4.10"/>
    </reaction>
</comment>
<comment type="pathway">
    <text evidence="1">Purine metabolism; IMP biosynthesis via de novo pathway; 5-formamido-1-(5-phospho-D-ribosyl)imidazole-4-carboxamide from 5-amino-1-(5-phospho-D-ribosyl)imidazole-4-carboxamide (10-formyl THF route): step 1/1.</text>
</comment>
<comment type="pathway">
    <text evidence="1">Purine metabolism; IMP biosynthesis via de novo pathway; IMP from 5-formamido-1-(5-phospho-D-ribosyl)imidazole-4-carboxamide: step 1/1.</text>
</comment>
<comment type="domain">
    <text evidence="1">The IMP cyclohydrolase activity resides in the N-terminal region.</text>
</comment>
<comment type="similarity">
    <text evidence="1">Belongs to the PurH family.</text>
</comment>
<evidence type="ECO:0000255" key="1">
    <source>
        <dbReference type="HAMAP-Rule" id="MF_00139"/>
    </source>
</evidence>
<evidence type="ECO:0000255" key="2">
    <source>
        <dbReference type="PROSITE-ProRule" id="PRU01202"/>
    </source>
</evidence>
<accession>A1KH91</accession>
<proteinExistence type="inferred from homology"/>
<reference key="1">
    <citation type="journal article" date="2007" name="Proc. Natl. Acad. Sci. U.S.A.">
        <title>Genome plasticity of BCG and impact on vaccine efficacy.</title>
        <authorList>
            <person name="Brosch R."/>
            <person name="Gordon S.V."/>
            <person name="Garnier T."/>
            <person name="Eiglmeier K."/>
            <person name="Frigui W."/>
            <person name="Valenti P."/>
            <person name="Dos Santos S."/>
            <person name="Duthoy S."/>
            <person name="Lacroix C."/>
            <person name="Garcia-Pelayo C."/>
            <person name="Inwald J.K."/>
            <person name="Golby P."/>
            <person name="Garcia J.N."/>
            <person name="Hewinson R.G."/>
            <person name="Behr M.A."/>
            <person name="Quail M.A."/>
            <person name="Churcher C."/>
            <person name="Barrell B.G."/>
            <person name="Parkhill J."/>
            <person name="Cole S.T."/>
        </authorList>
    </citation>
    <scope>NUCLEOTIDE SEQUENCE [LARGE SCALE GENOMIC DNA]</scope>
    <source>
        <strain>BCG / Pasteur 1173P2</strain>
    </source>
</reference>
<name>PUR9_MYCBP</name>
<dbReference type="EC" id="2.1.2.3" evidence="1"/>
<dbReference type="EC" id="3.5.4.10" evidence="1"/>
<dbReference type="EMBL" id="AM408590">
    <property type="protein sequence ID" value="CAL70997.1"/>
    <property type="molecule type" value="Genomic_DNA"/>
</dbReference>
<dbReference type="RefSeq" id="WP_003404890.1">
    <property type="nucleotide sequence ID" value="NC_008769.1"/>
</dbReference>
<dbReference type="SMR" id="A1KH91"/>
<dbReference type="KEGG" id="mbb:BCG_1011"/>
<dbReference type="HOGENOM" id="CLU_016316_5_2_11"/>
<dbReference type="UniPathway" id="UPA00074">
    <property type="reaction ID" value="UER00133"/>
</dbReference>
<dbReference type="UniPathway" id="UPA00074">
    <property type="reaction ID" value="UER00135"/>
</dbReference>
<dbReference type="Proteomes" id="UP000001472">
    <property type="component" value="Chromosome"/>
</dbReference>
<dbReference type="GO" id="GO:0005829">
    <property type="term" value="C:cytosol"/>
    <property type="evidence" value="ECO:0007669"/>
    <property type="project" value="TreeGrafter"/>
</dbReference>
<dbReference type="GO" id="GO:0003937">
    <property type="term" value="F:IMP cyclohydrolase activity"/>
    <property type="evidence" value="ECO:0007669"/>
    <property type="project" value="UniProtKB-UniRule"/>
</dbReference>
<dbReference type="GO" id="GO:0004643">
    <property type="term" value="F:phosphoribosylaminoimidazolecarboxamide formyltransferase activity"/>
    <property type="evidence" value="ECO:0007669"/>
    <property type="project" value="UniProtKB-UniRule"/>
</dbReference>
<dbReference type="GO" id="GO:0006189">
    <property type="term" value="P:'de novo' IMP biosynthetic process"/>
    <property type="evidence" value="ECO:0007669"/>
    <property type="project" value="UniProtKB-UniRule"/>
</dbReference>
<dbReference type="CDD" id="cd01421">
    <property type="entry name" value="IMPCH"/>
    <property type="match status" value="1"/>
</dbReference>
<dbReference type="FunFam" id="3.40.140.20:FF:000001">
    <property type="entry name" value="Bifunctional purine biosynthesis protein PurH"/>
    <property type="match status" value="1"/>
</dbReference>
<dbReference type="FunFam" id="3.40.50.1380:FF:000001">
    <property type="entry name" value="Bifunctional purine biosynthesis protein PurH"/>
    <property type="match status" value="1"/>
</dbReference>
<dbReference type="Gene3D" id="3.40.140.20">
    <property type="match status" value="2"/>
</dbReference>
<dbReference type="Gene3D" id="3.40.50.1380">
    <property type="entry name" value="Methylglyoxal synthase-like domain"/>
    <property type="match status" value="1"/>
</dbReference>
<dbReference type="HAMAP" id="MF_00139">
    <property type="entry name" value="PurH"/>
    <property type="match status" value="1"/>
</dbReference>
<dbReference type="InterPro" id="IPR024051">
    <property type="entry name" value="AICAR_Tfase_dup_dom_sf"/>
</dbReference>
<dbReference type="InterPro" id="IPR016193">
    <property type="entry name" value="Cytidine_deaminase-like"/>
</dbReference>
<dbReference type="InterPro" id="IPR011607">
    <property type="entry name" value="MGS-like_dom"/>
</dbReference>
<dbReference type="InterPro" id="IPR036914">
    <property type="entry name" value="MGS-like_dom_sf"/>
</dbReference>
<dbReference type="InterPro" id="IPR002695">
    <property type="entry name" value="PurH-like"/>
</dbReference>
<dbReference type="NCBIfam" id="NF002049">
    <property type="entry name" value="PRK00881.1"/>
    <property type="match status" value="1"/>
</dbReference>
<dbReference type="NCBIfam" id="TIGR00355">
    <property type="entry name" value="purH"/>
    <property type="match status" value="1"/>
</dbReference>
<dbReference type="PANTHER" id="PTHR11692:SF0">
    <property type="entry name" value="BIFUNCTIONAL PURINE BIOSYNTHESIS PROTEIN ATIC"/>
    <property type="match status" value="1"/>
</dbReference>
<dbReference type="PANTHER" id="PTHR11692">
    <property type="entry name" value="BIFUNCTIONAL PURINE BIOSYNTHESIS PROTEIN PURH"/>
    <property type="match status" value="1"/>
</dbReference>
<dbReference type="Pfam" id="PF01808">
    <property type="entry name" value="AICARFT_IMPCHas"/>
    <property type="match status" value="1"/>
</dbReference>
<dbReference type="Pfam" id="PF02142">
    <property type="entry name" value="MGS"/>
    <property type="match status" value="1"/>
</dbReference>
<dbReference type="PIRSF" id="PIRSF000414">
    <property type="entry name" value="AICARFT_IMPCHas"/>
    <property type="match status" value="1"/>
</dbReference>
<dbReference type="SMART" id="SM00798">
    <property type="entry name" value="AICARFT_IMPCHas"/>
    <property type="match status" value="1"/>
</dbReference>
<dbReference type="SMART" id="SM00851">
    <property type="entry name" value="MGS"/>
    <property type="match status" value="1"/>
</dbReference>
<dbReference type="SUPFAM" id="SSF53927">
    <property type="entry name" value="Cytidine deaminase-like"/>
    <property type="match status" value="1"/>
</dbReference>
<dbReference type="SUPFAM" id="SSF52335">
    <property type="entry name" value="Methylglyoxal synthase-like"/>
    <property type="match status" value="1"/>
</dbReference>
<dbReference type="PROSITE" id="PS51855">
    <property type="entry name" value="MGS"/>
    <property type="match status" value="1"/>
</dbReference>
<organism>
    <name type="scientific">Mycobacterium bovis (strain BCG / Pasteur 1173P2)</name>
    <dbReference type="NCBI Taxonomy" id="410289"/>
    <lineage>
        <taxon>Bacteria</taxon>
        <taxon>Bacillati</taxon>
        <taxon>Actinomycetota</taxon>
        <taxon>Actinomycetes</taxon>
        <taxon>Mycobacteriales</taxon>
        <taxon>Mycobacteriaceae</taxon>
        <taxon>Mycobacterium</taxon>
        <taxon>Mycobacterium tuberculosis complex</taxon>
    </lineage>
</organism>
<protein>
    <recommendedName>
        <fullName evidence="1">Bifunctional purine biosynthesis protein PurH</fullName>
    </recommendedName>
    <domain>
        <recommendedName>
            <fullName evidence="1">Phosphoribosylaminoimidazolecarboxamide formyltransferase</fullName>
            <ecNumber evidence="1">2.1.2.3</ecNumber>
        </recommendedName>
        <alternativeName>
            <fullName evidence="1">AICAR transformylase</fullName>
        </alternativeName>
    </domain>
    <domain>
        <recommendedName>
            <fullName evidence="1">IMP cyclohydrolase</fullName>
            <ecNumber evidence="1">3.5.4.10</ecNumber>
        </recommendedName>
        <alternativeName>
            <fullName evidence="1">ATIC</fullName>
        </alternativeName>
        <alternativeName>
            <fullName evidence="1">IMP synthase</fullName>
        </alternativeName>
        <alternativeName>
            <fullName evidence="1">Inosinicase</fullName>
        </alternativeName>
    </domain>
</protein>
<sequence length="523" mass="55026">MSTDDGRRPIRRALISVYDKTGLVDLAQGLSAAGVEIISTGSTAKTIADTGIPVTPVEQLTGFPEVLDGRVKTLHPRVHAGLLADLRKSEHAAALEQLGIEAFELVVVNLYPFSQTVESGASVDDCVEQIDIGGPAMVRAAAKNHPSAAVVTDPLGYHGVLAALRAGGFTLAERKRLASLAFQHIAEYDIAVASWMQQTLAPEHPVAAFPQWFGRSWRRVAMLRYGENPHQQAALYGDPTAWPGLAQAEQLHGKDMSYNNFTDADAAWRAAFDHEQTCVAIIKHANPCGIAISSVSVADAHRKAHECDPLSAYGGVIAANTEVSVEMAEYVSTIFTEVIVAPGYAPGALDVLARKKNIRVLVAAEPLAGGSELRPISGGLLIQQSDQLDAHGDNPANWTLATGSPADPATLTDLVFAWRACRAVKSNAIVIAADGATVGVGMGQVNRVDAARLAVERGGERVRGAVAASDAFFPFPDGLETLAAAGVTAVVHPGGSVRDEEVTEAAAKAGVTLYLTGARHFAH</sequence>
<keyword id="KW-0378">Hydrolase</keyword>
<keyword id="KW-0511">Multifunctional enzyme</keyword>
<keyword id="KW-0658">Purine biosynthesis</keyword>
<keyword id="KW-0808">Transferase</keyword>
<feature type="chain" id="PRO_1000018910" description="Bifunctional purine biosynthesis protein PurH">
    <location>
        <begin position="1"/>
        <end position="523"/>
    </location>
</feature>
<feature type="domain" description="MGS-like" evidence="2">
    <location>
        <begin position="1"/>
        <end position="152"/>
    </location>
</feature>
<gene>
    <name evidence="1" type="primary">purH</name>
    <name type="ordered locus">BCG_1011</name>
</gene>